<evidence type="ECO:0000250" key="1">
    <source>
        <dbReference type="UniProtKB" id="Q6UX01"/>
    </source>
</evidence>
<evidence type="ECO:0000250" key="2">
    <source>
        <dbReference type="UniProtKB" id="Q9D1E5"/>
    </source>
</evidence>
<evidence type="ECO:0000255" key="3"/>
<evidence type="ECO:0000305" key="4"/>
<accession>Q7ZX75</accession>
<proteinExistence type="evidence at transcript level"/>
<feature type="chain" id="PRO_0000053914" description="Protein LMBR1L">
    <location>
        <begin position="1"/>
        <end position="483"/>
    </location>
</feature>
<feature type="topological domain" description="Extracellular" evidence="3">
    <location>
        <begin position="1"/>
        <end position="21"/>
    </location>
</feature>
<feature type="transmembrane region" description="Helical" evidence="3">
    <location>
        <begin position="22"/>
        <end position="42"/>
    </location>
</feature>
<feature type="topological domain" description="Cytoplasmic" evidence="3">
    <location>
        <begin position="43"/>
        <end position="60"/>
    </location>
</feature>
<feature type="transmembrane region" description="Helical" evidence="3">
    <location>
        <begin position="61"/>
        <end position="81"/>
    </location>
</feature>
<feature type="topological domain" description="Extracellular" evidence="3">
    <location>
        <begin position="82"/>
        <end position="112"/>
    </location>
</feature>
<feature type="transmembrane region" description="Helical" evidence="3">
    <location>
        <begin position="113"/>
        <end position="133"/>
    </location>
</feature>
<feature type="topological domain" description="Cytoplasmic" evidence="3">
    <location>
        <begin position="134"/>
        <end position="153"/>
    </location>
</feature>
<feature type="transmembrane region" description="Helical" evidence="3">
    <location>
        <begin position="154"/>
        <end position="174"/>
    </location>
</feature>
<feature type="topological domain" description="Extracellular" evidence="3">
    <location>
        <begin position="175"/>
        <end position="194"/>
    </location>
</feature>
<feature type="transmembrane region" description="Helical" evidence="3">
    <location>
        <begin position="195"/>
        <end position="215"/>
    </location>
</feature>
<feature type="topological domain" description="Cytoplasmic" evidence="3">
    <location>
        <begin position="216"/>
        <end position="294"/>
    </location>
</feature>
<feature type="transmembrane region" description="Helical" evidence="3">
    <location>
        <begin position="295"/>
        <end position="315"/>
    </location>
</feature>
<feature type="topological domain" description="Extracellular" evidence="3">
    <location>
        <begin position="316"/>
        <end position="342"/>
    </location>
</feature>
<feature type="transmembrane region" description="Helical" evidence="3">
    <location>
        <begin position="343"/>
        <end position="363"/>
    </location>
</feature>
<feature type="topological domain" description="Cytoplasmic" evidence="3">
    <location>
        <begin position="364"/>
        <end position="386"/>
    </location>
</feature>
<feature type="transmembrane region" description="Helical" evidence="3">
    <location>
        <begin position="387"/>
        <end position="407"/>
    </location>
</feature>
<feature type="topological domain" description="Extracellular" evidence="3">
    <location>
        <begin position="408"/>
        <end position="429"/>
    </location>
</feature>
<feature type="transmembrane region" description="Helical" evidence="3">
    <location>
        <begin position="430"/>
        <end position="450"/>
    </location>
</feature>
<feature type="topological domain" description="Cytoplasmic" evidence="3">
    <location>
        <begin position="451"/>
        <end position="483"/>
    </location>
</feature>
<keyword id="KW-1003">Cell membrane</keyword>
<keyword id="KW-0254">Endocytosis</keyword>
<keyword id="KW-0256">Endoplasmic reticulum</keyword>
<keyword id="KW-0472">Membrane</keyword>
<keyword id="KW-0675">Receptor</keyword>
<keyword id="KW-1185">Reference proteome</keyword>
<keyword id="KW-0812">Transmembrane</keyword>
<keyword id="KW-1133">Transmembrane helix</keyword>
<keyword id="KW-0879">Wnt signaling pathway</keyword>
<name>LMBRL_XENLA</name>
<dbReference type="EMBL" id="BC045132">
    <property type="protein sequence ID" value="AAH45132.1"/>
    <property type="molecule type" value="mRNA"/>
</dbReference>
<dbReference type="RefSeq" id="NP_001080737.1">
    <property type="nucleotide sequence ID" value="NM_001087268.1"/>
</dbReference>
<dbReference type="SMR" id="Q7ZX75"/>
<dbReference type="GeneID" id="380429"/>
<dbReference type="KEGG" id="xla:380429"/>
<dbReference type="AGR" id="Xenbase:XB-GENE-5859065"/>
<dbReference type="CTD" id="380429"/>
<dbReference type="Xenbase" id="XB-GENE-5859065">
    <property type="gene designation" value="lmbr1l.L"/>
</dbReference>
<dbReference type="OrthoDB" id="5596951at2759"/>
<dbReference type="Proteomes" id="UP000186698">
    <property type="component" value="Chromosome 2L"/>
</dbReference>
<dbReference type="Bgee" id="380429">
    <property type="expression patterns" value="Expressed in blastula and 19 other cell types or tissues"/>
</dbReference>
<dbReference type="GO" id="GO:0005789">
    <property type="term" value="C:endoplasmic reticulum membrane"/>
    <property type="evidence" value="ECO:0000250"/>
    <property type="project" value="UniProtKB"/>
</dbReference>
<dbReference type="GO" id="GO:0005886">
    <property type="term" value="C:plasma membrane"/>
    <property type="evidence" value="ECO:0000250"/>
    <property type="project" value="UniProtKB"/>
</dbReference>
<dbReference type="GO" id="GO:0004888">
    <property type="term" value="F:transmembrane signaling receptor activity"/>
    <property type="evidence" value="ECO:0000318"/>
    <property type="project" value="GO_Central"/>
</dbReference>
<dbReference type="GO" id="GO:0090090">
    <property type="term" value="P:negative regulation of canonical Wnt signaling pathway"/>
    <property type="evidence" value="ECO:0000250"/>
    <property type="project" value="UniProtKB"/>
</dbReference>
<dbReference type="GO" id="GO:0006898">
    <property type="term" value="P:receptor-mediated endocytosis"/>
    <property type="evidence" value="ECO:0000318"/>
    <property type="project" value="GO_Central"/>
</dbReference>
<dbReference type="GO" id="GO:0007165">
    <property type="term" value="P:signal transduction"/>
    <property type="evidence" value="ECO:0000318"/>
    <property type="project" value="GO_Central"/>
</dbReference>
<dbReference type="GO" id="GO:0016055">
    <property type="term" value="P:Wnt signaling pathway"/>
    <property type="evidence" value="ECO:0007669"/>
    <property type="project" value="UniProtKB-KW"/>
</dbReference>
<dbReference type="InterPro" id="IPR008075">
    <property type="entry name" value="LIMR"/>
</dbReference>
<dbReference type="InterPro" id="IPR006876">
    <property type="entry name" value="LMBR1-like_membr_prot"/>
</dbReference>
<dbReference type="PANTHER" id="PTHR12625">
    <property type="entry name" value="LIPOCALIN-1 INTERACTING MEMBRANE RECEPTOR LIMR"/>
    <property type="match status" value="1"/>
</dbReference>
<dbReference type="PANTHER" id="PTHR12625:SF2">
    <property type="entry name" value="PROTEIN LMBR1L"/>
    <property type="match status" value="1"/>
</dbReference>
<dbReference type="Pfam" id="PF04791">
    <property type="entry name" value="LMBR1"/>
    <property type="match status" value="2"/>
</dbReference>
<dbReference type="PRINTS" id="PR01692">
    <property type="entry name" value="LIPOCALINIMR"/>
</dbReference>
<comment type="function">
    <text evidence="1 2">May play a role in lymphocyte development by negatively regulating the canonical Wnt signaling pathway (By similarity). May act as a LCN1 receptor (By similarity).</text>
</comment>
<comment type="subunit">
    <text evidence="1">Dimer (By similarity). Can also form higher oligomers (By similarity).</text>
</comment>
<comment type="subcellular location">
    <subcellularLocation>
        <location evidence="1">Cell membrane</location>
        <topology evidence="3">Multi-pass membrane protein</topology>
    </subcellularLocation>
    <subcellularLocation>
        <location evidence="1">Endoplasmic reticulum membrane</location>
        <topology evidence="3">Multi-pass membrane protein</topology>
    </subcellularLocation>
</comment>
<comment type="similarity">
    <text evidence="4">Belongs to the LIMR family.</text>
</comment>
<protein>
    <recommendedName>
        <fullName>Protein LMBR1L</fullName>
    </recommendedName>
</protein>
<sequence length="483" mass="54229">MEVNQDVSVREQIFHDWVRECIICSLLFSTLYLLSYIVITKFKKHADFATVDVEDAAVNRIALWMCTFTLAVSVGAVLLLPFSIISNEVLLSVPHNYYIQWLNGSLIHGLWNLVFLFSNLSLVFLMPFAYLFTEAEGFAGSKKGVMSRVYETTVVLLLLTLLVFGIVWVASAIFDDDSAGRESLYDLWEYYLPYLYSGISLFGVLLLLLCTPFGLSRMFSVTGNLLVKPRLLENLEEHLSCTAFEEAAISRKISTKASCWLNLNMEALQKRLLAIQSHRITLEMRRRASPWQRNLVYPLAMLLLLALTGITVLIVCVNVLELLIDEAAMPKGIQGSQLGKVSFSVFGSFGAAVQVILIFYLMASSVVGFYSSPLFIQLLPQKQNTPMTKIIGNCVSLLILSSALPVFSRTLGITRFDLLGDFGRFNWLGNFYLILLYNMMFAGLATLCLVKKFTWAVQAELIRAFGLDRLPLSVKKIRSQGKA</sequence>
<reference key="1">
    <citation type="submission" date="2003-01" db="EMBL/GenBank/DDBJ databases">
        <authorList>
            <consortium name="NIH - Xenopus Gene Collection (XGC) project"/>
        </authorList>
    </citation>
    <scope>NUCLEOTIDE SEQUENCE [LARGE SCALE MRNA]</scope>
    <source>
        <tissue>Embryo</tissue>
    </source>
</reference>
<organism>
    <name type="scientific">Xenopus laevis</name>
    <name type="common">African clawed frog</name>
    <dbReference type="NCBI Taxonomy" id="8355"/>
    <lineage>
        <taxon>Eukaryota</taxon>
        <taxon>Metazoa</taxon>
        <taxon>Chordata</taxon>
        <taxon>Craniata</taxon>
        <taxon>Vertebrata</taxon>
        <taxon>Euteleostomi</taxon>
        <taxon>Amphibia</taxon>
        <taxon>Batrachia</taxon>
        <taxon>Anura</taxon>
        <taxon>Pipoidea</taxon>
        <taxon>Pipidae</taxon>
        <taxon>Xenopodinae</taxon>
        <taxon>Xenopus</taxon>
        <taxon>Xenopus</taxon>
    </lineage>
</organism>
<gene>
    <name type="primary">lmbr1l</name>
</gene>